<comment type="function">
    <text evidence="2">Myotropic peptide; increases the frequency of contraction of the heart and stimulates amplitude and tonus of the foregut.</text>
</comment>
<comment type="subcellular location">
    <subcellularLocation>
        <location evidence="2">Secreted</location>
    </subcellularLocation>
</comment>
<comment type="mass spectrometry"/>
<comment type="similarity">
    <text evidence="1">Belongs to the periviscerokinin family.</text>
</comment>
<accession>P84442</accession>
<proteinExistence type="evidence at protein level"/>
<protein>
    <recommendedName>
        <fullName>Periviscerokinin</fullName>
    </recommendedName>
</protein>
<feature type="peptide" id="PRO_0000044238" description="Periviscerokinin">
    <location>
        <begin position="1"/>
        <end position="10"/>
    </location>
</feature>
<feature type="modified residue" description="Valine amide" evidence="2">
    <location>
        <position position="10"/>
    </location>
</feature>
<name>PVK_PHYMO</name>
<reference evidence="3" key="1">
    <citation type="journal article" date="2002" name="Peptides">
        <title>Identification of the abundant neuropeptide from abdominal perisympathetic organs of locusts.</title>
        <authorList>
            <person name="Predel R."/>
            <person name="Gaede G."/>
        </authorList>
    </citation>
    <scope>PROTEIN SEQUENCE</scope>
    <scope>FUNCTION</scope>
    <scope>SUBCELLULAR LOCATION</scope>
    <scope>MASS SPECTROMETRY</scope>
    <scope>AMIDATION AT VAL-10</scope>
    <source>
        <tissue evidence="2">Abdominal perisympathetic organs</tissue>
    </source>
</reference>
<evidence type="ECO:0000255" key="1"/>
<evidence type="ECO:0000269" key="2">
    <source>
    </source>
</evidence>
<evidence type="ECO:0000305" key="3"/>
<keyword id="KW-0027">Amidation</keyword>
<keyword id="KW-0903">Direct protein sequencing</keyword>
<keyword id="KW-0527">Neuropeptide</keyword>
<keyword id="KW-0964">Secreted</keyword>
<sequence>AAGLFQFPRV</sequence>
<organism>
    <name type="scientific">Phymateus morbillosus</name>
    <name type="common">Gaudy grasshopper</name>
    <dbReference type="NCBI Taxonomy" id="310747"/>
    <lineage>
        <taxon>Eukaryota</taxon>
        <taxon>Metazoa</taxon>
        <taxon>Ecdysozoa</taxon>
        <taxon>Arthropoda</taxon>
        <taxon>Hexapoda</taxon>
        <taxon>Insecta</taxon>
        <taxon>Pterygota</taxon>
        <taxon>Neoptera</taxon>
        <taxon>Polyneoptera</taxon>
        <taxon>Orthoptera</taxon>
        <taxon>Caelifera</taxon>
        <taxon>Acrididea</taxon>
        <taxon>Acridomorpha</taxon>
        <taxon>Pyrgomorphoidea</taxon>
        <taxon>Pyrgomorphidae</taxon>
        <taxon>Pyrgomorphinae</taxon>
        <taxon>Phymateus</taxon>
    </lineage>
</organism>
<dbReference type="GO" id="GO:0005576">
    <property type="term" value="C:extracellular region"/>
    <property type="evidence" value="ECO:0007669"/>
    <property type="project" value="UniProtKB-SubCell"/>
</dbReference>
<dbReference type="GO" id="GO:0007218">
    <property type="term" value="P:neuropeptide signaling pathway"/>
    <property type="evidence" value="ECO:0007669"/>
    <property type="project" value="UniProtKB-KW"/>
</dbReference>